<reference key="1">
    <citation type="submission" date="2008-04" db="EMBL/GenBank/DDBJ databases">
        <authorList>
            <consortium name="NIH - Xenopus Gene Collection (XGC) project"/>
        </authorList>
    </citation>
    <scope>NUCLEOTIDE SEQUENCE [LARGE SCALE MRNA]</scope>
    <source>
        <tissue>Embryo</tissue>
    </source>
</reference>
<gene>
    <name type="primary">rfx2</name>
</gene>
<feature type="chain" id="PRO_0000380699" description="DNA-binding protein RFX2">
    <location>
        <begin position="1"/>
        <end position="694"/>
    </location>
</feature>
<feature type="DNA-binding region" description="RFX-type winged-helix" evidence="4">
    <location>
        <begin position="174"/>
        <end position="249"/>
    </location>
</feature>
<feature type="region of interest" description="Disordered" evidence="5">
    <location>
        <begin position="268"/>
        <end position="309"/>
    </location>
</feature>
<feature type="region of interest" description="Disordered" evidence="5">
    <location>
        <begin position="659"/>
        <end position="694"/>
    </location>
</feature>
<feature type="compositionally biased region" description="Polar residues" evidence="5">
    <location>
        <begin position="288"/>
        <end position="299"/>
    </location>
</feature>
<feature type="compositionally biased region" description="Low complexity" evidence="5">
    <location>
        <begin position="300"/>
        <end position="309"/>
    </location>
</feature>
<protein>
    <recommendedName>
        <fullName>DNA-binding protein RFX2</fullName>
    </recommendedName>
    <alternativeName>
        <fullName>Regulatory factor X 2</fullName>
    </alternativeName>
</protein>
<organism>
    <name type="scientific">Xenopus tropicalis</name>
    <name type="common">Western clawed frog</name>
    <name type="synonym">Silurana tropicalis</name>
    <dbReference type="NCBI Taxonomy" id="8364"/>
    <lineage>
        <taxon>Eukaryota</taxon>
        <taxon>Metazoa</taxon>
        <taxon>Chordata</taxon>
        <taxon>Craniata</taxon>
        <taxon>Vertebrata</taxon>
        <taxon>Euteleostomi</taxon>
        <taxon>Amphibia</taxon>
        <taxon>Batrachia</taxon>
        <taxon>Anura</taxon>
        <taxon>Pipoidea</taxon>
        <taxon>Pipidae</taxon>
        <taxon>Xenopodinae</taxon>
        <taxon>Xenopus</taxon>
        <taxon>Silurana</taxon>
    </lineage>
</organism>
<sequence>MQNSDSGSDSATSVALRTSASAQAPVVQPVPASQQVQTVQHVYPAQVQYVEGDTVYTNGAIRTAYSYNAEAQIYAPSSGSSYFDSQGGGAQVTTVVSSPTAIPSHSMVGIAMDVSGSQIISSSGAYLIHGGLENSRHTPSHTSRTFPATLEMAIENLQKNEGITSHKSSLLNSHLQWLLDNYETAEGVSLPRSSLYNHYLRHCQDHKLDPVNAASFGKLIRSVFMGLRTRRLGTRGNSKYHYYGIRLKPDSPLNRLQEDTQYMAIRQQPIHQKQRYRPAQKMDGMGENTANSSQHTSPEQSVAAQSQHHQQFIDTAHVFPDFPEPDLGNVLLPEGITMTDIKNLQLMYRRHCEATIDVVMNLQFQYIEKLWQAFWNSKPSSPDGSNPMNSEDEQEPIIPKDKLMVLCKYEPIMRWMRNCDHILYQALVEILIPDVLRPVPSTLTQAIRNFAKSLEGWLTNAMCDFPQQIVHAKVGVVSAFAQTLRRYTSLNHLAQAARAVLQNTSQINQMLSDLNRVDFANVQEQASWVCQCEEGMVQKLEQDFKLTLQQQSSLDQWANWLDNVVTQVLKPHEGSPSFPKAARQFLLKWSFYSSMVIRDLTLRSAASFGSFHLIRLLYDEYMFYLVEHRVAQATGETPIAVMGEFSDFASMSPVLMDKDDVSELGSDNDGDPRISGQPPVKRERVDLNHSMQEM</sequence>
<evidence type="ECO:0000250" key="1">
    <source>
        <dbReference type="UniProtKB" id="B2GV50"/>
    </source>
</evidence>
<evidence type="ECO:0000250" key="2">
    <source>
        <dbReference type="UniProtKB" id="P48379"/>
    </source>
</evidence>
<evidence type="ECO:0000250" key="3">
    <source>
        <dbReference type="UniProtKB" id="Q32NR3"/>
    </source>
</evidence>
<evidence type="ECO:0000255" key="4">
    <source>
        <dbReference type="PROSITE-ProRule" id="PRU00858"/>
    </source>
</evidence>
<evidence type="ECO:0000256" key="5">
    <source>
        <dbReference type="SAM" id="MobiDB-lite"/>
    </source>
</evidence>
<dbReference type="EMBL" id="BC161512">
    <property type="protein sequence ID" value="AAI61512.1"/>
    <property type="molecule type" value="mRNA"/>
</dbReference>
<dbReference type="RefSeq" id="NP_001116955.1">
    <property type="nucleotide sequence ID" value="NM_001123483.1"/>
</dbReference>
<dbReference type="SMR" id="B1WAV2"/>
<dbReference type="FunCoup" id="B1WAV2">
    <property type="interactions" value="1311"/>
</dbReference>
<dbReference type="STRING" id="8364.ENSXETP00000037151"/>
<dbReference type="PaxDb" id="8364-ENSXETP00000047352"/>
<dbReference type="GeneID" id="100144734"/>
<dbReference type="KEGG" id="xtr:100144734"/>
<dbReference type="AGR" id="Xenbase:XB-GENE-991774"/>
<dbReference type="CTD" id="5990"/>
<dbReference type="Xenbase" id="XB-GENE-991774">
    <property type="gene designation" value="rfx2"/>
</dbReference>
<dbReference type="eggNOG" id="KOG3712">
    <property type="taxonomic scope" value="Eukaryota"/>
</dbReference>
<dbReference type="HOGENOM" id="CLU_010393_1_1_1"/>
<dbReference type="InParanoid" id="B1WAV2"/>
<dbReference type="OrthoDB" id="10056949at2759"/>
<dbReference type="Proteomes" id="UP000008143">
    <property type="component" value="Chromosome 1"/>
</dbReference>
<dbReference type="Bgee" id="ENSXETG00000021877">
    <property type="expression patterns" value="Expressed in testis and 21 other cell types or tissues"/>
</dbReference>
<dbReference type="GO" id="GO:0005737">
    <property type="term" value="C:cytoplasm"/>
    <property type="evidence" value="ECO:0007669"/>
    <property type="project" value="UniProtKB-SubCell"/>
</dbReference>
<dbReference type="GO" id="GO:0005634">
    <property type="term" value="C:nucleus"/>
    <property type="evidence" value="ECO:0007669"/>
    <property type="project" value="UniProtKB-SubCell"/>
</dbReference>
<dbReference type="GO" id="GO:0003700">
    <property type="term" value="F:DNA-binding transcription factor activity"/>
    <property type="evidence" value="ECO:0000250"/>
    <property type="project" value="UniProtKB"/>
</dbReference>
<dbReference type="GO" id="GO:0000978">
    <property type="term" value="F:RNA polymerase II cis-regulatory region sequence-specific DNA binding"/>
    <property type="evidence" value="ECO:0000250"/>
    <property type="project" value="UniProtKB"/>
</dbReference>
<dbReference type="GO" id="GO:0060271">
    <property type="term" value="P:cilium assembly"/>
    <property type="evidence" value="ECO:0000250"/>
    <property type="project" value="UniProtKB"/>
</dbReference>
<dbReference type="GO" id="GO:0001843">
    <property type="term" value="P:neural tube closure"/>
    <property type="evidence" value="ECO:0000250"/>
    <property type="project" value="UniProtKB"/>
</dbReference>
<dbReference type="GO" id="GO:0006357">
    <property type="term" value="P:regulation of transcription by RNA polymerase II"/>
    <property type="evidence" value="ECO:0000250"/>
    <property type="project" value="UniProtKB"/>
</dbReference>
<dbReference type="FunFam" id="1.10.10.10:FF:000017">
    <property type="entry name" value="transcription factor RFX3 isoform X1"/>
    <property type="match status" value="1"/>
</dbReference>
<dbReference type="Gene3D" id="1.10.10.10">
    <property type="entry name" value="Winged helix-like DNA-binding domain superfamily/Winged helix DNA-binding domain"/>
    <property type="match status" value="1"/>
</dbReference>
<dbReference type="InterPro" id="IPR003150">
    <property type="entry name" value="DNA-bd_RFX"/>
</dbReference>
<dbReference type="InterPro" id="IPR039779">
    <property type="entry name" value="RFX-like"/>
</dbReference>
<dbReference type="InterPro" id="IPR007668">
    <property type="entry name" value="RFX1_trans_act"/>
</dbReference>
<dbReference type="InterPro" id="IPR036388">
    <property type="entry name" value="WH-like_DNA-bd_sf"/>
</dbReference>
<dbReference type="InterPro" id="IPR036390">
    <property type="entry name" value="WH_DNA-bd_sf"/>
</dbReference>
<dbReference type="PANTHER" id="PTHR12619:SF17">
    <property type="entry name" value="DNA-BINDING PROTEIN RFX2"/>
    <property type="match status" value="1"/>
</dbReference>
<dbReference type="PANTHER" id="PTHR12619">
    <property type="entry name" value="RFX TRANSCRIPTION FACTOR FAMILY"/>
    <property type="match status" value="1"/>
</dbReference>
<dbReference type="Pfam" id="PF25340">
    <property type="entry name" value="BCD_RFX"/>
    <property type="match status" value="1"/>
</dbReference>
<dbReference type="Pfam" id="PF04589">
    <property type="entry name" value="RFX1_trans_act"/>
    <property type="match status" value="1"/>
</dbReference>
<dbReference type="Pfam" id="PF02257">
    <property type="entry name" value="RFX_DNA_binding"/>
    <property type="match status" value="1"/>
</dbReference>
<dbReference type="SUPFAM" id="SSF46785">
    <property type="entry name" value="Winged helix' DNA-binding domain"/>
    <property type="match status" value="1"/>
</dbReference>
<dbReference type="PROSITE" id="PS51526">
    <property type="entry name" value="RFX_DBD"/>
    <property type="match status" value="1"/>
</dbReference>
<accession>B1WAV2</accession>
<name>RFX2_XENTR</name>
<proteinExistence type="evidence at transcript level"/>
<keyword id="KW-0970">Cilium biogenesis/degradation</keyword>
<keyword id="KW-0963">Cytoplasm</keyword>
<keyword id="KW-0238">DNA-binding</keyword>
<keyword id="KW-0539">Nucleus</keyword>
<keyword id="KW-1185">Reference proteome</keyword>
<keyword id="KW-0804">Transcription</keyword>
<keyword id="KW-0805">Transcription regulation</keyword>
<comment type="function">
    <text evidence="3">Transcription factor that acts as a key regulator of ciliogenesis. Specifically regulates expression of genes required for cilium assembly and function. Recognizes and binds the X-box, a regulatory motif with DNA sequence 5'-GTNRCC(0-3N)RGYAAC-3' present on promoters. Required for neural tube closure and neural ciliogenesis.</text>
</comment>
<comment type="subunit">
    <text evidence="2">Homodimer. Heterodimer; heterodimerizes with other rfx proteins.</text>
</comment>
<comment type="subcellular location">
    <subcellularLocation>
        <location evidence="1 4">Nucleus</location>
    </subcellularLocation>
    <subcellularLocation>
        <location evidence="1">Cytoplasm</location>
    </subcellularLocation>
    <text evidence="1">Mainly expressed in the nucleus and at lower level in cytoplasm.</text>
</comment>
<comment type="similarity">
    <text evidence="4">Belongs to the RFX family.</text>
</comment>